<reference key="1">
    <citation type="journal article" date="2006" name="Proc. Natl. Acad. Sci. U.S.A.">
        <title>Comparative genomics of the lactic acid bacteria.</title>
        <authorList>
            <person name="Makarova K.S."/>
            <person name="Slesarev A."/>
            <person name="Wolf Y.I."/>
            <person name="Sorokin A."/>
            <person name="Mirkin B."/>
            <person name="Koonin E.V."/>
            <person name="Pavlov A."/>
            <person name="Pavlova N."/>
            <person name="Karamychev V."/>
            <person name="Polouchine N."/>
            <person name="Shakhova V."/>
            <person name="Grigoriev I."/>
            <person name="Lou Y."/>
            <person name="Rohksar D."/>
            <person name="Lucas S."/>
            <person name="Huang K."/>
            <person name="Goodstein D.M."/>
            <person name="Hawkins T."/>
            <person name="Plengvidhya V."/>
            <person name="Welker D."/>
            <person name="Hughes J."/>
            <person name="Goh Y."/>
            <person name="Benson A."/>
            <person name="Baldwin K."/>
            <person name="Lee J.-H."/>
            <person name="Diaz-Muniz I."/>
            <person name="Dosti B."/>
            <person name="Smeianov V."/>
            <person name="Wechter W."/>
            <person name="Barabote R."/>
            <person name="Lorca G."/>
            <person name="Altermann E."/>
            <person name="Barrangou R."/>
            <person name="Ganesan B."/>
            <person name="Xie Y."/>
            <person name="Rawsthorne H."/>
            <person name="Tamir D."/>
            <person name="Parker C."/>
            <person name="Breidt F."/>
            <person name="Broadbent J.R."/>
            <person name="Hutkins R."/>
            <person name="O'Sullivan D."/>
            <person name="Steele J."/>
            <person name="Unlu G."/>
            <person name="Saier M.H. Jr."/>
            <person name="Klaenhammer T."/>
            <person name="Richardson P."/>
            <person name="Kozyavkin S."/>
            <person name="Weimer B.C."/>
            <person name="Mills D.A."/>
        </authorList>
    </citation>
    <scope>NUCLEOTIDE SEQUENCE [LARGE SCALE GENOMIC DNA]</scope>
    <source>
        <strain>ATCC BAA-365 / Lb-18</strain>
    </source>
</reference>
<evidence type="ECO:0000255" key="1">
    <source>
        <dbReference type="HAMAP-Rule" id="MF_00249"/>
    </source>
</evidence>
<proteinExistence type="inferred from homology"/>
<dbReference type="EMBL" id="CP000412">
    <property type="protein sequence ID" value="ABJ58717.1"/>
    <property type="molecule type" value="Genomic_DNA"/>
</dbReference>
<dbReference type="RefSeq" id="WP_011678371.1">
    <property type="nucleotide sequence ID" value="NC_008529.1"/>
</dbReference>
<dbReference type="SMR" id="Q04A05"/>
<dbReference type="KEGG" id="lbu:LBUL_1186"/>
<dbReference type="HOGENOM" id="CLU_033123_0_0_9"/>
<dbReference type="BioCyc" id="LDEL321956:LBUL_RS05535-MONOMER"/>
<dbReference type="GO" id="GO:0009376">
    <property type="term" value="C:HslUV protease complex"/>
    <property type="evidence" value="ECO:0007669"/>
    <property type="project" value="UniProtKB-UniRule"/>
</dbReference>
<dbReference type="GO" id="GO:0005524">
    <property type="term" value="F:ATP binding"/>
    <property type="evidence" value="ECO:0007669"/>
    <property type="project" value="UniProtKB-UniRule"/>
</dbReference>
<dbReference type="GO" id="GO:0016887">
    <property type="term" value="F:ATP hydrolysis activity"/>
    <property type="evidence" value="ECO:0007669"/>
    <property type="project" value="InterPro"/>
</dbReference>
<dbReference type="GO" id="GO:0008233">
    <property type="term" value="F:peptidase activity"/>
    <property type="evidence" value="ECO:0007669"/>
    <property type="project" value="InterPro"/>
</dbReference>
<dbReference type="GO" id="GO:0036402">
    <property type="term" value="F:proteasome-activating activity"/>
    <property type="evidence" value="ECO:0007669"/>
    <property type="project" value="UniProtKB-UniRule"/>
</dbReference>
<dbReference type="GO" id="GO:0043335">
    <property type="term" value="P:protein unfolding"/>
    <property type="evidence" value="ECO:0007669"/>
    <property type="project" value="UniProtKB-UniRule"/>
</dbReference>
<dbReference type="GO" id="GO:0051603">
    <property type="term" value="P:proteolysis involved in protein catabolic process"/>
    <property type="evidence" value="ECO:0007669"/>
    <property type="project" value="TreeGrafter"/>
</dbReference>
<dbReference type="Gene3D" id="1.10.8.60">
    <property type="match status" value="1"/>
</dbReference>
<dbReference type="Gene3D" id="3.40.50.300">
    <property type="entry name" value="P-loop containing nucleotide triphosphate hydrolases"/>
    <property type="match status" value="2"/>
</dbReference>
<dbReference type="HAMAP" id="MF_00249">
    <property type="entry name" value="HslU"/>
    <property type="match status" value="1"/>
</dbReference>
<dbReference type="InterPro" id="IPR003593">
    <property type="entry name" value="AAA+_ATPase"/>
</dbReference>
<dbReference type="InterPro" id="IPR050052">
    <property type="entry name" value="ATP-dep_Clp_protease_ClpX"/>
</dbReference>
<dbReference type="InterPro" id="IPR003959">
    <property type="entry name" value="ATPase_AAA_core"/>
</dbReference>
<dbReference type="InterPro" id="IPR019489">
    <property type="entry name" value="Clp_ATPase_C"/>
</dbReference>
<dbReference type="InterPro" id="IPR004491">
    <property type="entry name" value="HslU"/>
</dbReference>
<dbReference type="InterPro" id="IPR027417">
    <property type="entry name" value="P-loop_NTPase"/>
</dbReference>
<dbReference type="NCBIfam" id="TIGR00390">
    <property type="entry name" value="hslU"/>
    <property type="match status" value="1"/>
</dbReference>
<dbReference type="NCBIfam" id="NF003544">
    <property type="entry name" value="PRK05201.1"/>
    <property type="match status" value="1"/>
</dbReference>
<dbReference type="PANTHER" id="PTHR48102">
    <property type="entry name" value="ATP-DEPENDENT CLP PROTEASE ATP-BINDING SUBUNIT CLPX-LIKE, MITOCHONDRIAL-RELATED"/>
    <property type="match status" value="1"/>
</dbReference>
<dbReference type="PANTHER" id="PTHR48102:SF3">
    <property type="entry name" value="ATP-DEPENDENT PROTEASE ATPASE SUBUNIT HSLU"/>
    <property type="match status" value="1"/>
</dbReference>
<dbReference type="Pfam" id="PF00004">
    <property type="entry name" value="AAA"/>
    <property type="match status" value="1"/>
</dbReference>
<dbReference type="Pfam" id="PF07724">
    <property type="entry name" value="AAA_2"/>
    <property type="match status" value="1"/>
</dbReference>
<dbReference type="Pfam" id="PF10431">
    <property type="entry name" value="ClpB_D2-small"/>
    <property type="match status" value="1"/>
</dbReference>
<dbReference type="SMART" id="SM00382">
    <property type="entry name" value="AAA"/>
    <property type="match status" value="1"/>
</dbReference>
<dbReference type="SMART" id="SM01086">
    <property type="entry name" value="ClpB_D2-small"/>
    <property type="match status" value="1"/>
</dbReference>
<dbReference type="SUPFAM" id="SSF52540">
    <property type="entry name" value="P-loop containing nucleoside triphosphate hydrolases"/>
    <property type="match status" value="1"/>
</dbReference>
<protein>
    <recommendedName>
        <fullName evidence="1">ATP-dependent protease ATPase subunit HslU</fullName>
    </recommendedName>
    <alternativeName>
        <fullName evidence="1">Unfoldase HslU</fullName>
    </alternativeName>
</protein>
<sequence length="464" mass="51920">MREKTPKQIVDLLDKYIVGQNEAKKSVAIALYNRYRRAQLPEDVQKDITPKNILMAGPTGVGKTEIARRLADIVDAPFVKVEATKFTEVGYVGRDVESMVRDLANEAVRIVEKEEFVKVESQAIRQANKTLVRLLVPGVKRNNRQNQMQQMQEMMQSLLAGGGMPEETEEVTDEIRNQRLSVAEKLDRGLLENEEVIIEVEQAPKANPMGDMMGQMGMDMSSMLGDMLPKKKVKRTLPVGQARKLLVQEEEKKLVNYDDIYQKAMDRAGQSGIIFIDEIDKITAADKRNSAGVSREGVQRDILPIVEGSTVSTKYGPLSTDHILFIAAGAFAESKPSDLIPELQGRFPIRVELNALTKDDFVRILKDPQNSLLKQYIALLKADGVDLVFTAEAVDKIAEIAFEVNQGTDNIGARRLATILEKLLEEVLYEGPDMEMGQITITQAYVEQKLSDIVKNKDLTKFIL</sequence>
<feature type="chain" id="PRO_1000012754" description="ATP-dependent protease ATPase subunit HslU">
    <location>
        <begin position="1"/>
        <end position="464"/>
    </location>
</feature>
<feature type="binding site" evidence="1">
    <location>
        <position position="18"/>
    </location>
    <ligand>
        <name>ATP</name>
        <dbReference type="ChEBI" id="CHEBI:30616"/>
    </ligand>
</feature>
<feature type="binding site" evidence="1">
    <location>
        <begin position="60"/>
        <end position="65"/>
    </location>
    <ligand>
        <name>ATP</name>
        <dbReference type="ChEBI" id="CHEBI:30616"/>
    </ligand>
</feature>
<feature type="binding site" evidence="1">
    <location>
        <position position="277"/>
    </location>
    <ligand>
        <name>ATP</name>
        <dbReference type="ChEBI" id="CHEBI:30616"/>
    </ligand>
</feature>
<feature type="binding site" evidence="1">
    <location>
        <position position="342"/>
    </location>
    <ligand>
        <name>ATP</name>
        <dbReference type="ChEBI" id="CHEBI:30616"/>
    </ligand>
</feature>
<feature type="binding site" evidence="1">
    <location>
        <position position="414"/>
    </location>
    <ligand>
        <name>ATP</name>
        <dbReference type="ChEBI" id="CHEBI:30616"/>
    </ligand>
</feature>
<accession>Q04A05</accession>
<organism>
    <name type="scientific">Lactobacillus delbrueckii subsp. bulgaricus (strain ATCC BAA-365 / Lb-18)</name>
    <dbReference type="NCBI Taxonomy" id="321956"/>
    <lineage>
        <taxon>Bacteria</taxon>
        <taxon>Bacillati</taxon>
        <taxon>Bacillota</taxon>
        <taxon>Bacilli</taxon>
        <taxon>Lactobacillales</taxon>
        <taxon>Lactobacillaceae</taxon>
        <taxon>Lactobacillus</taxon>
    </lineage>
</organism>
<name>HSLU_LACDB</name>
<gene>
    <name evidence="1" type="primary">hslU</name>
    <name type="ordered locus">LBUL_1186</name>
</gene>
<keyword id="KW-0067">ATP-binding</keyword>
<keyword id="KW-0143">Chaperone</keyword>
<keyword id="KW-0963">Cytoplasm</keyword>
<keyword id="KW-0547">Nucleotide-binding</keyword>
<comment type="function">
    <text evidence="1">ATPase subunit of a proteasome-like degradation complex; this subunit has chaperone activity. The binding of ATP and its subsequent hydrolysis by HslU are essential for unfolding of protein substrates subsequently hydrolyzed by HslV. HslU recognizes the N-terminal part of its protein substrates and unfolds these before they are guided to HslV for hydrolysis.</text>
</comment>
<comment type="subunit">
    <text evidence="1">A double ring-shaped homohexamer of HslV is capped on each side by a ring-shaped HslU homohexamer. The assembly of the HslU/HslV complex is dependent on binding of ATP.</text>
</comment>
<comment type="subcellular location">
    <subcellularLocation>
        <location evidence="1">Cytoplasm</location>
    </subcellularLocation>
</comment>
<comment type="similarity">
    <text evidence="1">Belongs to the ClpX chaperone family. HslU subfamily.</text>
</comment>